<organism>
    <name type="scientific">Methanopyrus kandleri (strain AV19 / DSM 6324 / JCM 9639 / NBRC 100938)</name>
    <dbReference type="NCBI Taxonomy" id="190192"/>
    <lineage>
        <taxon>Archaea</taxon>
        <taxon>Methanobacteriati</taxon>
        <taxon>Methanobacteriota</taxon>
        <taxon>Methanomada group</taxon>
        <taxon>Methanopyri</taxon>
        <taxon>Methanopyrales</taxon>
        <taxon>Methanopyraceae</taxon>
        <taxon>Methanopyrus</taxon>
    </lineage>
</organism>
<evidence type="ECO:0000255" key="1">
    <source>
        <dbReference type="HAMAP-Rule" id="MF_01054"/>
    </source>
</evidence>
<reference key="1">
    <citation type="journal article" date="2002" name="Proc. Natl. Acad. Sci. U.S.A.">
        <title>The complete genome of hyperthermophile Methanopyrus kandleri AV19 and monophyly of archaeal methanogens.</title>
        <authorList>
            <person name="Slesarev A.I."/>
            <person name="Mezhevaya K.V."/>
            <person name="Makarova K.S."/>
            <person name="Polushin N.N."/>
            <person name="Shcherbinina O.V."/>
            <person name="Shakhova V.V."/>
            <person name="Belova G.I."/>
            <person name="Aravind L."/>
            <person name="Natale D.A."/>
            <person name="Rogozin I.B."/>
            <person name="Tatusov R.L."/>
            <person name="Wolf Y.I."/>
            <person name="Stetter K.O."/>
            <person name="Malykh A.G."/>
            <person name="Koonin E.V."/>
            <person name="Kozyavkin S.A."/>
        </authorList>
    </citation>
    <scope>NUCLEOTIDE SEQUENCE [LARGE SCALE GENOMIC DNA]</scope>
    <source>
        <strain>AV19 / DSM 6324 / JCM 9639 / NBRC 100938</strain>
    </source>
</reference>
<sequence>MTRAVVTVIGADRPGIVAGISSVLAEHNANIEDISQTVLRDLFAMVMLVDLSEADVSVGKLREELQKAGEELGVDVIVQHEDVYRAMHRV</sequence>
<gene>
    <name type="ordered locus">MK1213</name>
</gene>
<accession>Q8TW24</accession>
<proteinExistence type="inferred from homology"/>
<keyword id="KW-1185">Reference proteome</keyword>
<name>Y1213_METKA</name>
<protein>
    <recommendedName>
        <fullName evidence="1">UPF0237 protein MK1213</fullName>
    </recommendedName>
</protein>
<feature type="chain" id="PRO_0000219911" description="UPF0237 protein MK1213">
    <location>
        <begin position="1"/>
        <end position="90"/>
    </location>
</feature>
<feature type="domain" description="ACT" evidence="1">
    <location>
        <begin position="5"/>
        <end position="79"/>
    </location>
</feature>
<comment type="similarity">
    <text evidence="1">Belongs to the UPF0237 family.</text>
</comment>
<dbReference type="EMBL" id="AE009439">
    <property type="protein sequence ID" value="AAM02426.1"/>
    <property type="molecule type" value="Genomic_DNA"/>
</dbReference>
<dbReference type="RefSeq" id="WP_011019581.1">
    <property type="nucleotide sequence ID" value="NC_003551.1"/>
</dbReference>
<dbReference type="SMR" id="Q8TW24"/>
<dbReference type="STRING" id="190192.MK1213"/>
<dbReference type="PaxDb" id="190192-MK1213"/>
<dbReference type="EnsemblBacteria" id="AAM02426">
    <property type="protein sequence ID" value="AAM02426"/>
    <property type="gene ID" value="MK1213"/>
</dbReference>
<dbReference type="GeneID" id="1477808"/>
<dbReference type="KEGG" id="mka:MK1213"/>
<dbReference type="HOGENOM" id="CLU_155669_0_1_2"/>
<dbReference type="InParanoid" id="Q8TW24"/>
<dbReference type="OrthoDB" id="27277at2157"/>
<dbReference type="Proteomes" id="UP000001826">
    <property type="component" value="Chromosome"/>
</dbReference>
<dbReference type="CDD" id="cd04872">
    <property type="entry name" value="ACT_1ZPV"/>
    <property type="match status" value="1"/>
</dbReference>
<dbReference type="FunFam" id="3.30.70.260:FF:000032">
    <property type="entry name" value="UPF0237 protein SP_0238"/>
    <property type="match status" value="1"/>
</dbReference>
<dbReference type="Gene3D" id="3.30.70.260">
    <property type="match status" value="1"/>
</dbReference>
<dbReference type="HAMAP" id="MF_01054">
    <property type="entry name" value="UPF0237"/>
    <property type="match status" value="1"/>
</dbReference>
<dbReference type="InterPro" id="IPR045865">
    <property type="entry name" value="ACT-like_dom_sf"/>
</dbReference>
<dbReference type="InterPro" id="IPR002912">
    <property type="entry name" value="ACT_dom"/>
</dbReference>
<dbReference type="InterPro" id="IPR050990">
    <property type="entry name" value="UPF0237/GcvR_regulator"/>
</dbReference>
<dbReference type="InterPro" id="IPR022986">
    <property type="entry name" value="UPF0237_ACT"/>
</dbReference>
<dbReference type="NCBIfam" id="NF001220">
    <property type="entry name" value="PRK00194.1"/>
    <property type="match status" value="1"/>
</dbReference>
<dbReference type="PANTHER" id="PTHR34875">
    <property type="entry name" value="UPF0237 PROTEIN MJ1558"/>
    <property type="match status" value="1"/>
</dbReference>
<dbReference type="PANTHER" id="PTHR34875:SF6">
    <property type="entry name" value="UPF0237 PROTEIN MJ1558"/>
    <property type="match status" value="1"/>
</dbReference>
<dbReference type="Pfam" id="PF13740">
    <property type="entry name" value="ACT_6"/>
    <property type="match status" value="1"/>
</dbReference>
<dbReference type="SUPFAM" id="SSF55021">
    <property type="entry name" value="ACT-like"/>
    <property type="match status" value="1"/>
</dbReference>
<dbReference type="PROSITE" id="PS51671">
    <property type="entry name" value="ACT"/>
    <property type="match status" value="1"/>
</dbReference>